<evidence type="ECO:0000255" key="1">
    <source>
        <dbReference type="HAMAP-Rule" id="MF_00787"/>
    </source>
</evidence>
<organism>
    <name type="scientific">Brucella melitensis biotype 2 (strain ATCC 23457)</name>
    <dbReference type="NCBI Taxonomy" id="546272"/>
    <lineage>
        <taxon>Bacteria</taxon>
        <taxon>Pseudomonadati</taxon>
        <taxon>Pseudomonadota</taxon>
        <taxon>Alphaproteobacteria</taxon>
        <taxon>Hyphomicrobiales</taxon>
        <taxon>Brucellaceae</taxon>
        <taxon>Brucella/Ochrobactrum group</taxon>
        <taxon>Brucella</taxon>
    </lineage>
</organism>
<gene>
    <name evidence="1" type="primary">cbiD</name>
    <name type="ordered locus">BMEA_A1345</name>
</gene>
<protein>
    <recommendedName>
        <fullName evidence="1">Cobalt-precorrin-5B C(1)-methyltransferase</fullName>
        <ecNumber evidence="1">2.1.1.195</ecNumber>
    </recommendedName>
    <alternativeName>
        <fullName evidence="1">Cobalt-precorrin-6A synthase</fullName>
    </alternativeName>
</protein>
<accession>C0RJR0</accession>
<keyword id="KW-0169">Cobalamin biosynthesis</keyword>
<keyword id="KW-0489">Methyltransferase</keyword>
<keyword id="KW-0949">S-adenosyl-L-methionine</keyword>
<keyword id="KW-0808">Transferase</keyword>
<reference key="1">
    <citation type="submission" date="2009-03" db="EMBL/GenBank/DDBJ databases">
        <title>Brucella melitensis ATCC 23457 whole genome shotgun sequencing project.</title>
        <authorList>
            <person name="Setubal J.C."/>
            <person name="Boyle S."/>
            <person name="Crasta O.R."/>
            <person name="Gillespie J.J."/>
            <person name="Kenyon R.W."/>
            <person name="Lu J."/>
            <person name="Mane S."/>
            <person name="Nagrani S."/>
            <person name="Shallom J.M."/>
            <person name="Shallom S."/>
            <person name="Shukla M."/>
            <person name="Snyder E.E."/>
            <person name="Sobral B.W."/>
            <person name="Wattam A.R."/>
            <person name="Will R."/>
            <person name="Williams K."/>
            <person name="Yoo H."/>
            <person name="Munk C."/>
            <person name="Tapia R."/>
            <person name="Han C."/>
            <person name="Detter J.C."/>
            <person name="Bruce D."/>
            <person name="Brettin T.S."/>
        </authorList>
    </citation>
    <scope>NUCLEOTIDE SEQUENCE [LARGE SCALE GENOMIC DNA]</scope>
    <source>
        <strain>ATCC 23457</strain>
    </source>
</reference>
<comment type="function">
    <text evidence="1">Catalyzes the methylation of C-1 in cobalt-precorrin-5B to form cobalt-precorrin-6A.</text>
</comment>
<comment type="catalytic activity">
    <reaction evidence="1">
        <text>Co-precorrin-5B + S-adenosyl-L-methionine = Co-precorrin-6A + S-adenosyl-L-homocysteine</text>
        <dbReference type="Rhea" id="RHEA:26285"/>
        <dbReference type="ChEBI" id="CHEBI:57856"/>
        <dbReference type="ChEBI" id="CHEBI:59789"/>
        <dbReference type="ChEBI" id="CHEBI:60063"/>
        <dbReference type="ChEBI" id="CHEBI:60064"/>
        <dbReference type="EC" id="2.1.1.195"/>
    </reaction>
</comment>
<comment type="pathway">
    <text evidence="1">Cofactor biosynthesis; adenosylcobalamin biosynthesis; cob(II)yrinate a,c-diamide from sirohydrochlorin (anaerobic route): step 6/10.</text>
</comment>
<comment type="similarity">
    <text evidence="1">Belongs to the CbiD family.</text>
</comment>
<name>CBID_BRUMB</name>
<feature type="chain" id="PRO_1000148475" description="Cobalt-precorrin-5B C(1)-methyltransferase">
    <location>
        <begin position="1"/>
        <end position="369"/>
    </location>
</feature>
<sequence length="369" mass="38689">MNDETTPANKNPEKAELRCGWTTGACATAATKAALTALITGEFPDPVGIILPKGEVPYFQLAYEGLGEGYAMAGIVKDAGDDPDVTHGATIISTVYPAPPGTGIIFRAGEGVGTVTREGLAIPTPGEAAINPVPRRMMTEICEAICAEYGLPADLVITISVPGGEEIAQKTWNPRLGIIGGISILGTTGVVHPFSCSAWIHSIHRGIDVARAAGQKHVLGATGSTSEDAAQALYNLPDFAILDMGDFAGGVLKYLREHPIDRLTIAGGFAKLTKLAQGALDLHSSRSQVDKGFLWQIAERAGAPADMKERILLANTAMEVLELTQSIGIDIAGPIALEARQTALKTLRGAPVEVEIIVTDRKGNILARV</sequence>
<proteinExistence type="inferred from homology"/>
<dbReference type="EC" id="2.1.1.195" evidence="1"/>
<dbReference type="EMBL" id="CP001488">
    <property type="protein sequence ID" value="ACO01068.1"/>
    <property type="molecule type" value="Genomic_DNA"/>
</dbReference>
<dbReference type="RefSeq" id="WP_004686406.1">
    <property type="nucleotide sequence ID" value="NC_012441.1"/>
</dbReference>
<dbReference type="SMR" id="C0RJR0"/>
<dbReference type="KEGG" id="bmi:BMEA_A1345"/>
<dbReference type="HOGENOM" id="CLU_041273_0_0_5"/>
<dbReference type="UniPathway" id="UPA00148">
    <property type="reaction ID" value="UER00227"/>
</dbReference>
<dbReference type="Proteomes" id="UP000001748">
    <property type="component" value="Chromosome I"/>
</dbReference>
<dbReference type="GO" id="GO:0043780">
    <property type="term" value="F:cobalt-precorrin-5B C1-methyltransferase activity"/>
    <property type="evidence" value="ECO:0007669"/>
    <property type="project" value="RHEA"/>
</dbReference>
<dbReference type="GO" id="GO:0019251">
    <property type="term" value="P:anaerobic cobalamin biosynthetic process"/>
    <property type="evidence" value="ECO:0007669"/>
    <property type="project" value="UniProtKB-UniRule"/>
</dbReference>
<dbReference type="GO" id="GO:0032259">
    <property type="term" value="P:methylation"/>
    <property type="evidence" value="ECO:0007669"/>
    <property type="project" value="UniProtKB-KW"/>
</dbReference>
<dbReference type="Gene3D" id="3.30.2110.10">
    <property type="entry name" value="CbiD-like"/>
    <property type="match status" value="1"/>
</dbReference>
<dbReference type="HAMAP" id="MF_00787">
    <property type="entry name" value="CbiD"/>
    <property type="match status" value="1"/>
</dbReference>
<dbReference type="InterPro" id="IPR002748">
    <property type="entry name" value="CbiD"/>
</dbReference>
<dbReference type="InterPro" id="IPR036074">
    <property type="entry name" value="CbiD_sf"/>
</dbReference>
<dbReference type="NCBIfam" id="TIGR00312">
    <property type="entry name" value="cbiD"/>
    <property type="match status" value="1"/>
</dbReference>
<dbReference type="NCBIfam" id="NF000849">
    <property type="entry name" value="PRK00075.1-1"/>
    <property type="match status" value="1"/>
</dbReference>
<dbReference type="PANTHER" id="PTHR35863">
    <property type="entry name" value="COBALT-PRECORRIN-5B C(1)-METHYLTRANSFERASE"/>
    <property type="match status" value="1"/>
</dbReference>
<dbReference type="PANTHER" id="PTHR35863:SF1">
    <property type="entry name" value="COBALT-PRECORRIN-5B C(1)-METHYLTRANSFERASE"/>
    <property type="match status" value="1"/>
</dbReference>
<dbReference type="Pfam" id="PF01888">
    <property type="entry name" value="CbiD"/>
    <property type="match status" value="1"/>
</dbReference>
<dbReference type="PIRSF" id="PIRSF026782">
    <property type="entry name" value="CbiD"/>
    <property type="match status" value="1"/>
</dbReference>
<dbReference type="SUPFAM" id="SSF111342">
    <property type="entry name" value="CbiD-like"/>
    <property type="match status" value="1"/>
</dbReference>